<organism>
    <name type="scientific">Brucella abortus (strain S19)</name>
    <dbReference type="NCBI Taxonomy" id="430066"/>
    <lineage>
        <taxon>Bacteria</taxon>
        <taxon>Pseudomonadati</taxon>
        <taxon>Pseudomonadota</taxon>
        <taxon>Alphaproteobacteria</taxon>
        <taxon>Hyphomicrobiales</taxon>
        <taxon>Brucellaceae</taxon>
        <taxon>Brucella/Ochrobactrum group</taxon>
        <taxon>Brucella</taxon>
    </lineage>
</organism>
<accession>B2S5W1</accession>
<protein>
    <recommendedName>
        <fullName evidence="1">ATP-dependent Clp protease proteolytic subunit</fullName>
        <ecNumber evidence="1">3.4.21.92</ecNumber>
    </recommendedName>
    <alternativeName>
        <fullName evidence="1">Endopeptidase Clp</fullName>
    </alternativeName>
</protein>
<gene>
    <name evidence="1" type="primary">clpP</name>
    <name type="ordered locus">BAbS19_I10510</name>
</gene>
<evidence type="ECO:0000255" key="1">
    <source>
        <dbReference type="HAMAP-Rule" id="MF_00444"/>
    </source>
</evidence>
<reference key="1">
    <citation type="journal article" date="2008" name="PLoS ONE">
        <title>Genome sequence of Brucella abortus vaccine strain S19 compared to virulent strains yields candidate virulence genes.</title>
        <authorList>
            <person name="Crasta O.R."/>
            <person name="Folkerts O."/>
            <person name="Fei Z."/>
            <person name="Mane S.P."/>
            <person name="Evans C."/>
            <person name="Martino-Catt S."/>
            <person name="Bricker B."/>
            <person name="Yu G."/>
            <person name="Du L."/>
            <person name="Sobral B.W."/>
        </authorList>
    </citation>
    <scope>NUCLEOTIDE SEQUENCE [LARGE SCALE GENOMIC DNA]</scope>
    <source>
        <strain>S19</strain>
    </source>
</reference>
<proteinExistence type="inferred from homology"/>
<keyword id="KW-0963">Cytoplasm</keyword>
<keyword id="KW-0378">Hydrolase</keyword>
<keyword id="KW-0645">Protease</keyword>
<keyword id="KW-0720">Serine protease</keyword>
<comment type="function">
    <text evidence="1">Cleaves peptides in various proteins in a process that requires ATP hydrolysis. Has a chymotrypsin-like activity. Plays a major role in the degradation of misfolded proteins.</text>
</comment>
<comment type="catalytic activity">
    <reaction evidence="1">
        <text>Hydrolysis of proteins to small peptides in the presence of ATP and magnesium. alpha-casein is the usual test substrate. In the absence of ATP, only oligopeptides shorter than five residues are hydrolyzed (such as succinyl-Leu-Tyr-|-NHMec, and Leu-Tyr-Leu-|-Tyr-Trp, in which cleavage of the -Tyr-|-Leu- and -Tyr-|-Trp bonds also occurs).</text>
        <dbReference type="EC" id="3.4.21.92"/>
    </reaction>
</comment>
<comment type="subunit">
    <text evidence="1">Fourteen ClpP subunits assemble into 2 heptameric rings which stack back to back to give a disk-like structure with a central cavity, resembling the structure of eukaryotic proteasomes.</text>
</comment>
<comment type="subcellular location">
    <subcellularLocation>
        <location evidence="1">Cytoplasm</location>
    </subcellularLocation>
</comment>
<comment type="similarity">
    <text evidence="1">Belongs to the peptidase S14 family.</text>
</comment>
<sequence length="209" mass="23424">MRDPIETVMNLVPMVVEQTNRGERAYDIFSRLLKERIIFVNGPVEDGMSMLVCAQLLFLEAENPKKEINMYINSPGGVVTSGMAIYDTMQFIRPPVSTLCMGQAASMGSLLLTAGATGHRYALPNARIMVHQPSGGFQGQASDIERHAQDIIKMKRRLNEIYVKHTGRDYDTIERTLDRDHFMTAQEALEFGLIDKVVEARDVSADESK</sequence>
<dbReference type="EC" id="3.4.21.92" evidence="1"/>
<dbReference type="EMBL" id="CP000887">
    <property type="protein sequence ID" value="ACD72558.1"/>
    <property type="molecule type" value="Genomic_DNA"/>
</dbReference>
<dbReference type="RefSeq" id="WP_002964237.1">
    <property type="nucleotide sequence ID" value="NC_010742.1"/>
</dbReference>
<dbReference type="SMR" id="B2S5W1"/>
<dbReference type="MEROPS" id="S14.001"/>
<dbReference type="KEGG" id="bmc:BAbS19_I10510"/>
<dbReference type="HOGENOM" id="CLU_058707_3_2_5"/>
<dbReference type="Proteomes" id="UP000002565">
    <property type="component" value="Chromosome 1"/>
</dbReference>
<dbReference type="GO" id="GO:0005737">
    <property type="term" value="C:cytoplasm"/>
    <property type="evidence" value="ECO:0007669"/>
    <property type="project" value="UniProtKB-SubCell"/>
</dbReference>
<dbReference type="GO" id="GO:0009368">
    <property type="term" value="C:endopeptidase Clp complex"/>
    <property type="evidence" value="ECO:0007669"/>
    <property type="project" value="TreeGrafter"/>
</dbReference>
<dbReference type="GO" id="GO:0004176">
    <property type="term" value="F:ATP-dependent peptidase activity"/>
    <property type="evidence" value="ECO:0007669"/>
    <property type="project" value="InterPro"/>
</dbReference>
<dbReference type="GO" id="GO:0051117">
    <property type="term" value="F:ATPase binding"/>
    <property type="evidence" value="ECO:0007669"/>
    <property type="project" value="TreeGrafter"/>
</dbReference>
<dbReference type="GO" id="GO:0004252">
    <property type="term" value="F:serine-type endopeptidase activity"/>
    <property type="evidence" value="ECO:0007669"/>
    <property type="project" value="UniProtKB-UniRule"/>
</dbReference>
<dbReference type="GO" id="GO:0006515">
    <property type="term" value="P:protein quality control for misfolded or incompletely synthesized proteins"/>
    <property type="evidence" value="ECO:0007669"/>
    <property type="project" value="TreeGrafter"/>
</dbReference>
<dbReference type="CDD" id="cd07017">
    <property type="entry name" value="S14_ClpP_2"/>
    <property type="match status" value="1"/>
</dbReference>
<dbReference type="FunFam" id="3.90.226.10:FF:000001">
    <property type="entry name" value="ATP-dependent Clp protease proteolytic subunit"/>
    <property type="match status" value="1"/>
</dbReference>
<dbReference type="Gene3D" id="3.90.226.10">
    <property type="entry name" value="2-enoyl-CoA Hydratase, Chain A, domain 1"/>
    <property type="match status" value="1"/>
</dbReference>
<dbReference type="HAMAP" id="MF_00444">
    <property type="entry name" value="ClpP"/>
    <property type="match status" value="1"/>
</dbReference>
<dbReference type="InterPro" id="IPR001907">
    <property type="entry name" value="ClpP"/>
</dbReference>
<dbReference type="InterPro" id="IPR029045">
    <property type="entry name" value="ClpP/crotonase-like_dom_sf"/>
</dbReference>
<dbReference type="InterPro" id="IPR023562">
    <property type="entry name" value="ClpP/TepA"/>
</dbReference>
<dbReference type="InterPro" id="IPR033135">
    <property type="entry name" value="ClpP_His_AS"/>
</dbReference>
<dbReference type="InterPro" id="IPR018215">
    <property type="entry name" value="ClpP_Ser_AS"/>
</dbReference>
<dbReference type="NCBIfam" id="NF001368">
    <property type="entry name" value="PRK00277.1"/>
    <property type="match status" value="1"/>
</dbReference>
<dbReference type="NCBIfam" id="NF009205">
    <property type="entry name" value="PRK12553.1"/>
    <property type="match status" value="1"/>
</dbReference>
<dbReference type="PANTHER" id="PTHR10381">
    <property type="entry name" value="ATP-DEPENDENT CLP PROTEASE PROTEOLYTIC SUBUNIT"/>
    <property type="match status" value="1"/>
</dbReference>
<dbReference type="PANTHER" id="PTHR10381:SF70">
    <property type="entry name" value="ATP-DEPENDENT CLP PROTEASE PROTEOLYTIC SUBUNIT"/>
    <property type="match status" value="1"/>
</dbReference>
<dbReference type="Pfam" id="PF00574">
    <property type="entry name" value="CLP_protease"/>
    <property type="match status" value="1"/>
</dbReference>
<dbReference type="PRINTS" id="PR00127">
    <property type="entry name" value="CLPPROTEASEP"/>
</dbReference>
<dbReference type="SUPFAM" id="SSF52096">
    <property type="entry name" value="ClpP/crotonase"/>
    <property type="match status" value="1"/>
</dbReference>
<dbReference type="PROSITE" id="PS00382">
    <property type="entry name" value="CLP_PROTEASE_HIS"/>
    <property type="match status" value="1"/>
</dbReference>
<dbReference type="PROSITE" id="PS00381">
    <property type="entry name" value="CLP_PROTEASE_SER"/>
    <property type="match status" value="1"/>
</dbReference>
<name>CLPP_BRUA1</name>
<feature type="chain" id="PRO_1000189634" description="ATP-dependent Clp protease proteolytic subunit">
    <location>
        <begin position="1"/>
        <end position="209"/>
    </location>
</feature>
<feature type="active site" description="Nucleophile" evidence="1">
    <location>
        <position position="106"/>
    </location>
</feature>
<feature type="active site" evidence="1">
    <location>
        <position position="131"/>
    </location>
</feature>